<accession>Q0IHN7</accession>
<keyword id="KW-0175">Coiled coil</keyword>
<keyword id="KW-0963">Cytoplasm</keyword>
<keyword id="KW-0206">Cytoskeleton</keyword>
<keyword id="KW-0449">Lipoprotein</keyword>
<keyword id="KW-0519">Myristate</keyword>
<keyword id="KW-1185">Reference proteome</keyword>
<name>CCD69_XENTR</name>
<proteinExistence type="evidence at transcript level"/>
<evidence type="ECO:0000250" key="1">
    <source>
        <dbReference type="UniProtKB" id="A6NI79"/>
    </source>
</evidence>
<evidence type="ECO:0000255" key="2"/>
<evidence type="ECO:0000256" key="3">
    <source>
        <dbReference type="SAM" id="MobiDB-lite"/>
    </source>
</evidence>
<evidence type="ECO:0000305" key="4"/>
<dbReference type="EMBL" id="BC123063">
    <property type="protein sequence ID" value="AAI23064.1"/>
    <property type="molecule type" value="mRNA"/>
</dbReference>
<dbReference type="RefSeq" id="NP_001072629.1">
    <property type="nucleotide sequence ID" value="NM_001079161.1"/>
</dbReference>
<dbReference type="SMR" id="Q0IHN7"/>
<dbReference type="FunCoup" id="Q0IHN7">
    <property type="interactions" value="547"/>
</dbReference>
<dbReference type="STRING" id="8364.ENSXETP00000031329"/>
<dbReference type="PaxDb" id="8364-ENSXETP00000042070"/>
<dbReference type="DNASU" id="780085"/>
<dbReference type="GeneID" id="780085"/>
<dbReference type="KEGG" id="xtr:780085"/>
<dbReference type="AGR" id="Xenbase:XB-GENE-999147"/>
<dbReference type="CTD" id="26112"/>
<dbReference type="eggNOG" id="ENOG502RYPP">
    <property type="taxonomic scope" value="Eukaryota"/>
</dbReference>
<dbReference type="HOGENOM" id="CLU_079661_0_0_1"/>
<dbReference type="InParanoid" id="Q0IHN7"/>
<dbReference type="OMA" id="TWYNSEL"/>
<dbReference type="OrthoDB" id="10038993at2759"/>
<dbReference type="PhylomeDB" id="Q0IHN7"/>
<dbReference type="Proteomes" id="UP000008143">
    <property type="component" value="Chromosome 3"/>
</dbReference>
<dbReference type="Bgee" id="ENSXETG00000019409">
    <property type="expression patterns" value="Expressed in heart and 13 other cell types or tissues"/>
</dbReference>
<dbReference type="ExpressionAtlas" id="Q0IHN7">
    <property type="expression patterns" value="differential"/>
</dbReference>
<dbReference type="GO" id="GO:0005737">
    <property type="term" value="C:cytoplasm"/>
    <property type="evidence" value="ECO:0007669"/>
    <property type="project" value="UniProtKB-KW"/>
</dbReference>
<dbReference type="GO" id="GO:0030496">
    <property type="term" value="C:midbody"/>
    <property type="evidence" value="ECO:0007669"/>
    <property type="project" value="UniProtKB-SubCell"/>
</dbReference>
<dbReference type="GO" id="GO:0051233">
    <property type="term" value="C:spindle midzone"/>
    <property type="evidence" value="ECO:0000250"/>
    <property type="project" value="UniProtKB"/>
</dbReference>
<dbReference type="GO" id="GO:0051255">
    <property type="term" value="P:spindle midzone assembly"/>
    <property type="evidence" value="ECO:0000250"/>
    <property type="project" value="UniProtKB"/>
</dbReference>
<dbReference type="InterPro" id="IPR051293">
    <property type="entry name" value="MTUS1/CCDC69"/>
</dbReference>
<dbReference type="PANTHER" id="PTHR24200:SF6">
    <property type="entry name" value="COILED-COIL DOMAIN-CONTAINING PROTEIN 69"/>
    <property type="match status" value="1"/>
</dbReference>
<dbReference type="PANTHER" id="PTHR24200">
    <property type="entry name" value="TOUCAN, ISOFORM A"/>
    <property type="match status" value="1"/>
</dbReference>
<gene>
    <name type="primary">ccdc69</name>
</gene>
<reference key="1">
    <citation type="submission" date="2006-09" db="EMBL/GenBank/DDBJ databases">
        <authorList>
            <consortium name="NIH - Xenopus Gene Collection (XGC) project"/>
        </authorList>
    </citation>
    <scope>NUCLEOTIDE SEQUENCE [LARGE SCALE MRNA]</scope>
    <source>
        <strain>N6</strain>
        <tissue>Fat body</tissue>
    </source>
</reference>
<protein>
    <recommendedName>
        <fullName>Coiled-coil domain-containing protein 69</fullName>
    </recommendedName>
</protein>
<organism>
    <name type="scientific">Xenopus tropicalis</name>
    <name type="common">Western clawed frog</name>
    <name type="synonym">Silurana tropicalis</name>
    <dbReference type="NCBI Taxonomy" id="8364"/>
    <lineage>
        <taxon>Eukaryota</taxon>
        <taxon>Metazoa</taxon>
        <taxon>Chordata</taxon>
        <taxon>Craniata</taxon>
        <taxon>Vertebrata</taxon>
        <taxon>Euteleostomi</taxon>
        <taxon>Amphibia</taxon>
        <taxon>Batrachia</taxon>
        <taxon>Anura</taxon>
        <taxon>Pipoidea</taxon>
        <taxon>Pipidae</taxon>
        <taxon>Xenopodinae</taxon>
        <taxon>Xenopus</taxon>
        <taxon>Silurana</taxon>
    </lineage>
</organism>
<comment type="function">
    <text evidence="1">May act as a scaffold to regulate the recruitment and assembly of spindle midzone components.</text>
</comment>
<comment type="subcellular location">
    <subcellularLocation>
        <location evidence="1">Cytoplasm</location>
        <location evidence="1">Cytoskeleton</location>
        <location evidence="1">Spindle</location>
    </subcellularLocation>
    <subcellularLocation>
        <location evidence="1">Midbody</location>
    </subcellularLocation>
    <text evidence="1">During early anaphase, localizes along overlapping interpolar microtubules between the separating chromosomes. During late anaphase, localizes to the center of spindle midzone. Concentrated at the midbody during telophase.</text>
</comment>
<comment type="similarity">
    <text evidence="4">Belongs to the CCDC69 family.</text>
</comment>
<sequence>MGCKTSKMCCPRLRKKKRQKAHQEGLTSKELNDLNAKSQEPNELLQKIKKYEQETRDILQKHQAEKAALADTHKADVEARTLELQAQAQKDRDADIAKLLLEQAATIKVEMEEKLAELQKSNEQEKASLTETHQQLIDSLQERVDELKTQLASFQEKMKRVEESVLSQDYRRHIQDHGSPGQFWEQEIQSLHFVIEMKSELIREQDKRLRSHKSTMERNLVLEERSRTLQQENEALKVQTQKQGAVTVRLSEELLSTQATLEKQIHLREKLEREKEQNLYRAVNGDIPQQFSLQSNAQELPVMVL</sequence>
<feature type="initiator methionine" description="Removed" evidence="2">
    <location>
        <position position="1"/>
    </location>
</feature>
<feature type="chain" id="PRO_0000328967" description="Coiled-coil domain-containing protein 69">
    <location>
        <begin position="2"/>
        <end position="305"/>
    </location>
</feature>
<feature type="region of interest" description="Disordered" evidence="3">
    <location>
        <begin position="13"/>
        <end position="41"/>
    </location>
</feature>
<feature type="coiled-coil region" evidence="2">
    <location>
        <begin position="42"/>
        <end position="167"/>
    </location>
</feature>
<feature type="coiled-coil region" evidence="2">
    <location>
        <begin position="216"/>
        <end position="278"/>
    </location>
</feature>
<feature type="lipid moiety-binding region" description="N-myristoyl glycine" evidence="2">
    <location>
        <position position="2"/>
    </location>
</feature>